<evidence type="ECO:0000250" key="1"/>
<evidence type="ECO:0000250" key="2">
    <source>
        <dbReference type="UniProtKB" id="P49591"/>
    </source>
</evidence>
<evidence type="ECO:0000269" key="3">
    <source>
    </source>
</evidence>
<evidence type="ECO:0000305" key="4"/>
<evidence type="ECO:0000305" key="5">
    <source>
    </source>
</evidence>
<evidence type="ECO:0000305" key="6">
    <source>
    </source>
</evidence>
<evidence type="ECO:0000305" key="7">
    <source>
    </source>
</evidence>
<evidence type="ECO:0007744" key="8">
    <source>
        <dbReference type="PDB" id="6GIR"/>
    </source>
</evidence>
<evidence type="ECO:0007829" key="9">
    <source>
        <dbReference type="PDB" id="6GIR"/>
    </source>
</evidence>
<proteinExistence type="evidence at protein level"/>
<organism>
    <name type="scientific">Arabidopsis thaliana</name>
    <name type="common">Mouse-ear cress</name>
    <dbReference type="NCBI Taxonomy" id="3702"/>
    <lineage>
        <taxon>Eukaryota</taxon>
        <taxon>Viridiplantae</taxon>
        <taxon>Streptophyta</taxon>
        <taxon>Embryophyta</taxon>
        <taxon>Tracheophyta</taxon>
        <taxon>Spermatophyta</taxon>
        <taxon>Magnoliopsida</taxon>
        <taxon>eudicotyledons</taxon>
        <taxon>Gunneridae</taxon>
        <taxon>Pentapetalae</taxon>
        <taxon>rosids</taxon>
        <taxon>malvids</taxon>
        <taxon>Brassicales</taxon>
        <taxon>Brassicaceae</taxon>
        <taxon>Camelineae</taxon>
        <taxon>Arabidopsis</taxon>
    </lineage>
</organism>
<feature type="chain" id="PRO_0000122195" description="Serine--tRNA ligase, cytoplasmic">
    <location>
        <begin position="1"/>
        <end position="451"/>
    </location>
</feature>
<feature type="binding site" evidence="1">
    <location>
        <begin position="238"/>
        <end position="240"/>
    </location>
    <ligand>
        <name>L-serine</name>
        <dbReference type="ChEBI" id="CHEBI:33384"/>
    </ligand>
</feature>
<feature type="binding site" evidence="1">
    <location>
        <begin position="269"/>
        <end position="271"/>
    </location>
    <ligand>
        <name>ATP</name>
        <dbReference type="ChEBI" id="CHEBI:30616"/>
    </ligand>
</feature>
<feature type="binding site" evidence="1">
    <location>
        <position position="285"/>
    </location>
    <ligand>
        <name>ATP</name>
        <dbReference type="ChEBI" id="CHEBI:30616"/>
    </ligand>
</feature>
<feature type="binding site" evidence="1">
    <location>
        <position position="292"/>
    </location>
    <ligand>
        <name>L-serine</name>
        <dbReference type="ChEBI" id="CHEBI:33384"/>
    </ligand>
</feature>
<feature type="binding site" evidence="1">
    <location>
        <begin position="358"/>
        <end position="361"/>
    </location>
    <ligand>
        <name>ATP</name>
        <dbReference type="ChEBI" id="CHEBI:30616"/>
    </ligand>
</feature>
<feature type="binding site" evidence="1">
    <location>
        <position position="396"/>
    </location>
    <ligand>
        <name>L-serine</name>
        <dbReference type="ChEBI" id="CHEBI:33384"/>
    </ligand>
</feature>
<feature type="disulfide bond" evidence="3 8">
    <location>
        <begin position="213"/>
        <end position="244"/>
    </location>
</feature>
<feature type="helix" evidence="9">
    <location>
        <begin position="4"/>
        <end position="7"/>
    </location>
</feature>
<feature type="helix" evidence="9">
    <location>
        <begin position="14"/>
        <end position="25"/>
    </location>
</feature>
<feature type="helix" evidence="9">
    <location>
        <begin position="31"/>
        <end position="60"/>
    </location>
</feature>
<feature type="turn" evidence="9">
    <location>
        <begin position="61"/>
        <end position="64"/>
    </location>
</feature>
<feature type="helix" evidence="9">
    <location>
        <begin position="76"/>
        <end position="105"/>
    </location>
</feature>
<feature type="helix" evidence="9">
    <location>
        <begin position="122"/>
        <end position="124"/>
    </location>
</feature>
<feature type="strand" evidence="9">
    <location>
        <begin position="126"/>
        <end position="132"/>
    </location>
</feature>
<feature type="strand" evidence="9">
    <location>
        <begin position="139"/>
        <end position="141"/>
    </location>
</feature>
<feature type="helix" evidence="9">
    <location>
        <begin position="146"/>
        <end position="153"/>
    </location>
</feature>
<feature type="helix" evidence="9">
    <location>
        <begin position="158"/>
        <end position="165"/>
    </location>
</feature>
<feature type="helix" evidence="9">
    <location>
        <begin position="175"/>
        <end position="193"/>
    </location>
</feature>
<feature type="strand" evidence="9">
    <location>
        <begin position="197"/>
        <end position="199"/>
    </location>
</feature>
<feature type="strand" evidence="9">
    <location>
        <begin position="203"/>
        <end position="206"/>
    </location>
</feature>
<feature type="helix" evidence="9">
    <location>
        <begin position="207"/>
        <end position="210"/>
    </location>
</feature>
<feature type="strand" evidence="9">
    <location>
        <begin position="229"/>
        <end position="231"/>
    </location>
</feature>
<feature type="strand" evidence="9">
    <location>
        <begin position="233"/>
        <end position="235"/>
    </location>
</feature>
<feature type="helix" evidence="9">
    <location>
        <begin position="240"/>
        <end position="245"/>
    </location>
</feature>
<feature type="turn" evidence="9">
    <location>
        <begin position="246"/>
        <end position="249"/>
    </location>
</feature>
<feature type="helix" evidence="9">
    <location>
        <begin position="254"/>
        <end position="256"/>
    </location>
</feature>
<feature type="strand" evidence="9">
    <location>
        <begin position="258"/>
        <end position="268"/>
    </location>
</feature>
<feature type="strand" evidence="9">
    <location>
        <begin position="282"/>
        <end position="284"/>
    </location>
</feature>
<feature type="strand" evidence="9">
    <location>
        <begin position="286"/>
        <end position="297"/>
    </location>
</feature>
<feature type="strand" evidence="9">
    <location>
        <begin position="299"/>
        <end position="302"/>
    </location>
</feature>
<feature type="helix" evidence="9">
    <location>
        <begin position="303"/>
        <end position="321"/>
    </location>
</feature>
<feature type="strand" evidence="9">
    <location>
        <begin position="326"/>
        <end position="330"/>
    </location>
</feature>
<feature type="turn" evidence="9">
    <location>
        <begin position="333"/>
        <end position="335"/>
    </location>
</feature>
<feature type="strand" evidence="9">
    <location>
        <begin position="341"/>
        <end position="350"/>
    </location>
</feature>
<feature type="turn" evidence="9">
    <location>
        <begin position="351"/>
        <end position="354"/>
    </location>
</feature>
<feature type="strand" evidence="9">
    <location>
        <begin position="355"/>
        <end position="364"/>
    </location>
</feature>
<feature type="helix" evidence="9">
    <location>
        <begin position="368"/>
        <end position="372"/>
    </location>
</feature>
<feature type="strand" evidence="9">
    <location>
        <begin position="391"/>
        <end position="399"/>
    </location>
</feature>
<feature type="helix" evidence="9">
    <location>
        <begin position="400"/>
        <end position="410"/>
    </location>
</feature>
<feature type="strand" evidence="9">
    <location>
        <begin position="414"/>
        <end position="418"/>
    </location>
</feature>
<feature type="helix" evidence="9">
    <location>
        <begin position="421"/>
        <end position="423"/>
    </location>
</feature>
<feature type="helix" evidence="9">
    <location>
        <begin position="425"/>
        <end position="427"/>
    </location>
</feature>
<feature type="strand" evidence="9">
    <location>
        <begin position="432"/>
        <end position="434"/>
    </location>
</feature>
<keyword id="KW-0002">3D-structure</keyword>
<keyword id="KW-0030">Aminoacyl-tRNA synthetase</keyword>
<keyword id="KW-0067">ATP-binding</keyword>
<keyword id="KW-0963">Cytoplasm</keyword>
<keyword id="KW-1015">Disulfide bond</keyword>
<keyword id="KW-0436">Ligase</keyword>
<keyword id="KW-0547">Nucleotide-binding</keyword>
<keyword id="KW-0648">Protein biosynthesis</keyword>
<keyword id="KW-1185">Reference proteome</keyword>
<protein>
    <recommendedName>
        <fullName evidence="4">Serine--tRNA ligase, cytoplasmic</fullName>
        <ecNumber evidence="2">6.1.1.11</ecNumber>
    </recommendedName>
    <alternativeName>
        <fullName evidence="4">Seryl-tRNA synthetase</fullName>
        <shortName evidence="4">SerRS</shortName>
    </alternativeName>
    <alternativeName>
        <fullName evidence="4">Seryl-tRNA(Ser) synthetase</fullName>
    </alternativeName>
</protein>
<sequence>MLDINLFREEKGNNPEIIRESQRRRFASVEIVDEIIKLDKEWRQRQFEVDSFRKEFNKLNKQVAQLKIKKEDASEIIQQTEKNKQDSTAKEAEVREAYAALKAKLEQVGNLVHDSVPVDKDEANNLVIKLWGEKRFSTPGLKLKNHVDLVELLGIADTKRGAEIAGARGFFLKGDGLMLNQALINFGLTFLKKRGFTGLQPPFFMRKDVMAKCAQLAQFDEELYKVTGEGDDKYLIATAEQPLCAYHIDEWIHPTELPLRYAGYSSCFRKEAGSHGRDTLGIFRVHQFEKIEQFCITGPNENASWEMLDEMMKNSEDFYQALKLPYQIVSIVSGALNDAAAKKYDLEAWFPSSETFRELVSCSNCTDYQARRLEIRYGQKKSNEQTKQYVHMLNSTLTATERTICCILENYQREDGVDIPEVLQPFMGGETFLPFKAKPVVADTKGKKSKA</sequence>
<gene>
    <name type="ordered locus">At5g27470</name>
    <name type="ORF">F21A20_180</name>
</gene>
<reference key="1">
    <citation type="online journal article" date="1996" name="Plant Gene Register">
        <title>A cDNA clone encoding Arabidopsis thaliana seryl-tRNA synthetase.</title>
        <authorList>
            <person name="Peeters N.M."/>
            <person name="Small I.D."/>
        </authorList>
        <locator>PGR96-047</locator>
    </citation>
    <scope>NUCLEOTIDE SEQUENCE [MRNA]</scope>
    <source>
        <strain>cv. Columbia</strain>
    </source>
</reference>
<reference key="2">
    <citation type="journal article" date="2000" name="Nature">
        <title>Sequence and analysis of chromosome 5 of the plant Arabidopsis thaliana.</title>
        <authorList>
            <person name="Tabata S."/>
            <person name="Kaneko T."/>
            <person name="Nakamura Y."/>
            <person name="Kotani H."/>
            <person name="Kato T."/>
            <person name="Asamizu E."/>
            <person name="Miyajima N."/>
            <person name="Sasamoto S."/>
            <person name="Kimura T."/>
            <person name="Hosouchi T."/>
            <person name="Kawashima K."/>
            <person name="Kohara M."/>
            <person name="Matsumoto M."/>
            <person name="Matsuno A."/>
            <person name="Muraki A."/>
            <person name="Nakayama S."/>
            <person name="Nakazaki N."/>
            <person name="Naruo K."/>
            <person name="Okumura S."/>
            <person name="Shinpo S."/>
            <person name="Takeuchi C."/>
            <person name="Wada T."/>
            <person name="Watanabe A."/>
            <person name="Yamada M."/>
            <person name="Yasuda M."/>
            <person name="Sato S."/>
            <person name="de la Bastide M."/>
            <person name="Huang E."/>
            <person name="Spiegel L."/>
            <person name="Gnoj L."/>
            <person name="O'Shaughnessy A."/>
            <person name="Preston R."/>
            <person name="Habermann K."/>
            <person name="Murray J."/>
            <person name="Johnson D."/>
            <person name="Rohlfing T."/>
            <person name="Nelson J."/>
            <person name="Stoneking T."/>
            <person name="Pepin K."/>
            <person name="Spieth J."/>
            <person name="Sekhon M."/>
            <person name="Armstrong J."/>
            <person name="Becker M."/>
            <person name="Belter E."/>
            <person name="Cordum H."/>
            <person name="Cordes M."/>
            <person name="Courtney L."/>
            <person name="Courtney W."/>
            <person name="Dante M."/>
            <person name="Du H."/>
            <person name="Edwards J."/>
            <person name="Fryman J."/>
            <person name="Haakensen B."/>
            <person name="Lamar E."/>
            <person name="Latreille P."/>
            <person name="Leonard S."/>
            <person name="Meyer R."/>
            <person name="Mulvaney E."/>
            <person name="Ozersky P."/>
            <person name="Riley A."/>
            <person name="Strowmatt C."/>
            <person name="Wagner-McPherson C."/>
            <person name="Wollam A."/>
            <person name="Yoakum M."/>
            <person name="Bell M."/>
            <person name="Dedhia N."/>
            <person name="Parnell L."/>
            <person name="Shah R."/>
            <person name="Rodriguez M."/>
            <person name="Hoon See L."/>
            <person name="Vil D."/>
            <person name="Baker J."/>
            <person name="Kirchoff K."/>
            <person name="Toth K."/>
            <person name="King L."/>
            <person name="Bahret A."/>
            <person name="Miller B."/>
            <person name="Marra M.A."/>
            <person name="Martienssen R."/>
            <person name="McCombie W.R."/>
            <person name="Wilson R.K."/>
            <person name="Murphy G."/>
            <person name="Bancroft I."/>
            <person name="Volckaert G."/>
            <person name="Wambutt R."/>
            <person name="Duesterhoeft A."/>
            <person name="Stiekema W."/>
            <person name="Pohl T."/>
            <person name="Entian K.-D."/>
            <person name="Terryn N."/>
            <person name="Hartley N."/>
            <person name="Bent E."/>
            <person name="Johnson S."/>
            <person name="Langham S.-A."/>
            <person name="McCullagh B."/>
            <person name="Robben J."/>
            <person name="Grymonprez B."/>
            <person name="Zimmermann W."/>
            <person name="Ramsperger U."/>
            <person name="Wedler H."/>
            <person name="Balke K."/>
            <person name="Wedler E."/>
            <person name="Peters S."/>
            <person name="van Staveren M."/>
            <person name="Dirkse W."/>
            <person name="Mooijman P."/>
            <person name="Klein Lankhorst R."/>
            <person name="Weitzenegger T."/>
            <person name="Bothe G."/>
            <person name="Rose M."/>
            <person name="Hauf J."/>
            <person name="Berneiser S."/>
            <person name="Hempel S."/>
            <person name="Feldpausch M."/>
            <person name="Lamberth S."/>
            <person name="Villarroel R."/>
            <person name="Gielen J."/>
            <person name="Ardiles W."/>
            <person name="Bents O."/>
            <person name="Lemcke K."/>
            <person name="Kolesov G."/>
            <person name="Mayer K.F.X."/>
            <person name="Rudd S."/>
            <person name="Schoof H."/>
            <person name="Schueller C."/>
            <person name="Zaccaria P."/>
            <person name="Mewes H.-W."/>
            <person name="Bevan M."/>
            <person name="Fransz P.F."/>
        </authorList>
    </citation>
    <scope>NUCLEOTIDE SEQUENCE [LARGE SCALE GENOMIC DNA]</scope>
    <source>
        <strain>cv. Columbia</strain>
    </source>
</reference>
<reference key="3">
    <citation type="journal article" date="2017" name="Plant J.">
        <title>Araport11: a complete reannotation of the Arabidopsis thaliana reference genome.</title>
        <authorList>
            <person name="Cheng C.Y."/>
            <person name="Krishnakumar V."/>
            <person name="Chan A.P."/>
            <person name="Thibaud-Nissen F."/>
            <person name="Schobel S."/>
            <person name="Town C.D."/>
        </authorList>
    </citation>
    <scope>GENOME REANNOTATION</scope>
    <source>
        <strain>cv. Columbia</strain>
    </source>
</reference>
<reference key="4">
    <citation type="journal article" date="2003" name="Science">
        <title>Empirical analysis of transcriptional activity in the Arabidopsis genome.</title>
        <authorList>
            <person name="Yamada K."/>
            <person name="Lim J."/>
            <person name="Dale J.M."/>
            <person name="Chen H."/>
            <person name="Shinn P."/>
            <person name="Palm C.J."/>
            <person name="Southwick A.M."/>
            <person name="Wu H.C."/>
            <person name="Kim C.J."/>
            <person name="Nguyen M."/>
            <person name="Pham P.K."/>
            <person name="Cheuk R.F."/>
            <person name="Karlin-Newmann G."/>
            <person name="Liu S.X."/>
            <person name="Lam B."/>
            <person name="Sakano H."/>
            <person name="Wu T."/>
            <person name="Yu G."/>
            <person name="Miranda M."/>
            <person name="Quach H.L."/>
            <person name="Tripp M."/>
            <person name="Chang C.H."/>
            <person name="Lee J.M."/>
            <person name="Toriumi M.J."/>
            <person name="Chan M.M."/>
            <person name="Tang C.C."/>
            <person name="Onodera C.S."/>
            <person name="Deng J.M."/>
            <person name="Akiyama K."/>
            <person name="Ansari Y."/>
            <person name="Arakawa T."/>
            <person name="Banh J."/>
            <person name="Banno F."/>
            <person name="Bowser L."/>
            <person name="Brooks S.Y."/>
            <person name="Carninci P."/>
            <person name="Chao Q."/>
            <person name="Choy N."/>
            <person name="Enju A."/>
            <person name="Goldsmith A.D."/>
            <person name="Gurjal M."/>
            <person name="Hansen N.F."/>
            <person name="Hayashizaki Y."/>
            <person name="Johnson-Hopson C."/>
            <person name="Hsuan V.W."/>
            <person name="Iida K."/>
            <person name="Karnes M."/>
            <person name="Khan S."/>
            <person name="Koesema E."/>
            <person name="Ishida J."/>
            <person name="Jiang P.X."/>
            <person name="Jones T."/>
            <person name="Kawai J."/>
            <person name="Kamiya A."/>
            <person name="Meyers C."/>
            <person name="Nakajima M."/>
            <person name="Narusaka M."/>
            <person name="Seki M."/>
            <person name="Sakurai T."/>
            <person name="Satou M."/>
            <person name="Tamse R."/>
            <person name="Vaysberg M."/>
            <person name="Wallender E.K."/>
            <person name="Wong C."/>
            <person name="Yamamura Y."/>
            <person name="Yuan S."/>
            <person name="Shinozaki K."/>
            <person name="Davis R.W."/>
            <person name="Theologis A."/>
            <person name="Ecker J.R."/>
        </authorList>
    </citation>
    <scope>NUCLEOTIDE SEQUENCE [LARGE SCALE MRNA]</scope>
    <source>
        <strain>cv. Columbia</strain>
    </source>
</reference>
<reference key="5">
    <citation type="journal article" date="2005" name="Plant J.">
        <title>Requirement of aminoacyl-tRNA synthetases for gametogenesis and embryo development in Arabidopsis.</title>
        <authorList>
            <person name="Berg M."/>
            <person name="Rogers R."/>
            <person name="Muralla R."/>
            <person name="Meinke D."/>
        </authorList>
    </citation>
    <scope>SUBCELLULAR LOCATION</scope>
</reference>
<reference key="6">
    <citation type="journal article" date="2005" name="Proc. Natl. Acad. Sci. U.S.A.">
        <title>Dual targeting is the rule for organellar aminoacyl-tRNA synthetases in Arabidopsis thaliana.</title>
        <authorList>
            <person name="Duchene A.-M."/>
            <person name="Giritch A."/>
            <person name="Hoffmann B."/>
            <person name="Cognat V."/>
            <person name="Lancelin D."/>
            <person name="Peeters N.M."/>
            <person name="Zaepfel M."/>
            <person name="Marechal-Drouard L."/>
            <person name="Small I.D."/>
        </authorList>
    </citation>
    <scope>SUBCELLULAR LOCATION</scope>
</reference>
<reference key="7">
    <citation type="journal article" date="2019" name="FEBS J.">
        <title>Arabidopsis seryl-tRNA synthetase: the first crystal structure and novel protein interactor of plant aminoacyl-tRNA synthetase.</title>
        <authorList>
            <person name="Kekez M."/>
            <person name="Zanki V."/>
            <person name="Kekez I."/>
            <person name="Baranasic J."/>
            <person name="Hodnik V."/>
            <person name="Duchene A.M."/>
            <person name="Anderluh G."/>
            <person name="Gruic-Sovulj I."/>
            <person name="Matkovic-Calogovic D."/>
            <person name="Weygand-Durasevic I."/>
            <person name="Rokov-Plavec J."/>
        </authorList>
    </citation>
    <scope>X-RAY CRYSTALLOGRAPHY (2.34 ANGSTROMS) OF 3-451</scope>
    <scope>DISULFIDE BOND</scope>
    <scope>HOMODIMERIZATION</scope>
    <scope>SUBUNIT</scope>
</reference>
<accession>Q39230</accession>
<name>SYSC_ARATH</name>
<dbReference type="EC" id="6.1.1.11" evidence="2"/>
<dbReference type="EMBL" id="Z70313">
    <property type="protein sequence ID" value="CAA94388.1"/>
    <property type="molecule type" value="mRNA"/>
</dbReference>
<dbReference type="EMBL" id="AC007123">
    <property type="status" value="NOT_ANNOTATED_CDS"/>
    <property type="molecule type" value="Genomic_DNA"/>
</dbReference>
<dbReference type="EMBL" id="CP002688">
    <property type="protein sequence ID" value="AED93692.1"/>
    <property type="molecule type" value="Genomic_DNA"/>
</dbReference>
<dbReference type="EMBL" id="AF360352">
    <property type="protein sequence ID" value="AAK28648.1"/>
    <property type="molecule type" value="mRNA"/>
</dbReference>
<dbReference type="EMBL" id="AY051054">
    <property type="protein sequence ID" value="AAK93731.1"/>
    <property type="molecule type" value="mRNA"/>
</dbReference>
<dbReference type="PIR" id="S71293">
    <property type="entry name" value="S71293"/>
</dbReference>
<dbReference type="RefSeq" id="NP_198099.1">
    <property type="nucleotide sequence ID" value="NM_122629.3"/>
</dbReference>
<dbReference type="PDB" id="6GIR">
    <property type="method" value="X-ray"/>
    <property type="resolution" value="2.34 A"/>
    <property type="chains" value="A=3-451"/>
</dbReference>
<dbReference type="PDBsum" id="6GIR"/>
<dbReference type="SMR" id="Q39230"/>
<dbReference type="BioGRID" id="18080">
    <property type="interactions" value="10"/>
</dbReference>
<dbReference type="FunCoup" id="Q39230">
    <property type="interactions" value="4290"/>
</dbReference>
<dbReference type="STRING" id="3702.Q39230"/>
<dbReference type="iPTMnet" id="Q39230"/>
<dbReference type="PaxDb" id="3702-AT5G27470.1"/>
<dbReference type="ProteomicsDB" id="233027"/>
<dbReference type="DNASU" id="832806"/>
<dbReference type="EnsemblPlants" id="AT5G27470.1">
    <property type="protein sequence ID" value="AT5G27470.1"/>
    <property type="gene ID" value="AT5G27470"/>
</dbReference>
<dbReference type="GeneID" id="832806"/>
<dbReference type="Gramene" id="AT5G27470.1">
    <property type="protein sequence ID" value="AT5G27470.1"/>
    <property type="gene ID" value="AT5G27470"/>
</dbReference>
<dbReference type="KEGG" id="ath:AT5G27470"/>
<dbReference type="Araport" id="AT5G27470"/>
<dbReference type="TAIR" id="AT5G27470"/>
<dbReference type="eggNOG" id="KOG2509">
    <property type="taxonomic scope" value="Eukaryota"/>
</dbReference>
<dbReference type="HOGENOM" id="CLU_023797_0_1_1"/>
<dbReference type="InParanoid" id="Q39230"/>
<dbReference type="OMA" id="GYTPCFR"/>
<dbReference type="OrthoDB" id="10264585at2759"/>
<dbReference type="PhylomeDB" id="Q39230"/>
<dbReference type="CD-CODE" id="4299E36E">
    <property type="entry name" value="Nucleolus"/>
</dbReference>
<dbReference type="PRO" id="PR:Q39230"/>
<dbReference type="Proteomes" id="UP000006548">
    <property type="component" value="Chromosome 5"/>
</dbReference>
<dbReference type="ExpressionAtlas" id="Q39230">
    <property type="expression patterns" value="baseline and differential"/>
</dbReference>
<dbReference type="GO" id="GO:0005829">
    <property type="term" value="C:cytosol"/>
    <property type="evidence" value="ECO:0007005"/>
    <property type="project" value="TAIR"/>
</dbReference>
<dbReference type="GO" id="GO:0009536">
    <property type="term" value="C:plastid"/>
    <property type="evidence" value="ECO:0007005"/>
    <property type="project" value="TAIR"/>
</dbReference>
<dbReference type="GO" id="GO:0005524">
    <property type="term" value="F:ATP binding"/>
    <property type="evidence" value="ECO:0007669"/>
    <property type="project" value="UniProtKB-KW"/>
</dbReference>
<dbReference type="GO" id="GO:0004828">
    <property type="term" value="F:serine-tRNA ligase activity"/>
    <property type="evidence" value="ECO:0000250"/>
    <property type="project" value="UniProtKB"/>
</dbReference>
<dbReference type="GO" id="GO:0002181">
    <property type="term" value="P:cytoplasmic translation"/>
    <property type="evidence" value="ECO:0000250"/>
    <property type="project" value="UniProtKB"/>
</dbReference>
<dbReference type="GO" id="GO:0006434">
    <property type="term" value="P:seryl-tRNA aminoacylation"/>
    <property type="evidence" value="ECO:0000250"/>
    <property type="project" value="UniProtKB"/>
</dbReference>
<dbReference type="CDD" id="cd00770">
    <property type="entry name" value="SerRS_core"/>
    <property type="match status" value="1"/>
</dbReference>
<dbReference type="FunFam" id="1.10.287.40:FF:000003">
    <property type="entry name" value="Serine--tRNA ligase cytoplasmic"/>
    <property type="match status" value="1"/>
</dbReference>
<dbReference type="FunFam" id="3.30.930.10:FF:000026">
    <property type="entry name" value="Seryl-tRNA synthetase, cytoplasmic"/>
    <property type="match status" value="1"/>
</dbReference>
<dbReference type="Gene3D" id="3.30.930.10">
    <property type="entry name" value="Bira Bifunctional Protein, Domain 2"/>
    <property type="match status" value="1"/>
</dbReference>
<dbReference type="Gene3D" id="1.10.287.40">
    <property type="entry name" value="Serine-tRNA synthetase, tRNA binding domain"/>
    <property type="match status" value="1"/>
</dbReference>
<dbReference type="InterPro" id="IPR002314">
    <property type="entry name" value="aa-tRNA-synt_IIb"/>
</dbReference>
<dbReference type="InterPro" id="IPR006195">
    <property type="entry name" value="aa-tRNA-synth_II"/>
</dbReference>
<dbReference type="InterPro" id="IPR045864">
    <property type="entry name" value="aa-tRNA-synth_II/BPL/LPL"/>
</dbReference>
<dbReference type="InterPro" id="IPR002317">
    <property type="entry name" value="Ser-tRNA-ligase_type_1"/>
</dbReference>
<dbReference type="InterPro" id="IPR015866">
    <property type="entry name" value="Ser-tRNA-synth_1_N"/>
</dbReference>
<dbReference type="InterPro" id="IPR042103">
    <property type="entry name" value="SerRS_1_N_sf"/>
</dbReference>
<dbReference type="InterPro" id="IPR033729">
    <property type="entry name" value="SerRS_core"/>
</dbReference>
<dbReference type="InterPro" id="IPR010978">
    <property type="entry name" value="tRNA-bd_arm"/>
</dbReference>
<dbReference type="NCBIfam" id="TIGR00414">
    <property type="entry name" value="serS"/>
    <property type="match status" value="1"/>
</dbReference>
<dbReference type="PANTHER" id="PTHR11778">
    <property type="entry name" value="SERYL-TRNA SYNTHETASE"/>
    <property type="match status" value="1"/>
</dbReference>
<dbReference type="Pfam" id="PF02403">
    <property type="entry name" value="Seryl_tRNA_N"/>
    <property type="match status" value="1"/>
</dbReference>
<dbReference type="Pfam" id="PF00587">
    <property type="entry name" value="tRNA-synt_2b"/>
    <property type="match status" value="1"/>
</dbReference>
<dbReference type="PIRSF" id="PIRSF001529">
    <property type="entry name" value="Ser-tRNA-synth_IIa"/>
    <property type="match status" value="1"/>
</dbReference>
<dbReference type="PRINTS" id="PR00981">
    <property type="entry name" value="TRNASYNTHSER"/>
</dbReference>
<dbReference type="SUPFAM" id="SSF55681">
    <property type="entry name" value="Class II aaRS and biotin synthetases"/>
    <property type="match status" value="1"/>
</dbReference>
<dbReference type="SUPFAM" id="SSF46589">
    <property type="entry name" value="tRNA-binding arm"/>
    <property type="match status" value="1"/>
</dbReference>
<dbReference type="PROSITE" id="PS50862">
    <property type="entry name" value="AA_TRNA_LIGASE_II"/>
    <property type="match status" value="1"/>
</dbReference>
<comment type="function">
    <text evidence="2">Catalyzes the attachment of serine to tRNA(Ser) in a two-step reaction: serine is first activated by ATP to form Ser-AMP and then transferred to the acceptor end of tRNA(Ser).</text>
</comment>
<comment type="catalytic activity">
    <reaction evidence="2">
        <text>tRNA(Ser) + L-serine + ATP = L-seryl-tRNA(Ser) + AMP + diphosphate + H(+)</text>
        <dbReference type="Rhea" id="RHEA:12292"/>
        <dbReference type="Rhea" id="RHEA-COMP:9669"/>
        <dbReference type="Rhea" id="RHEA-COMP:9703"/>
        <dbReference type="ChEBI" id="CHEBI:15378"/>
        <dbReference type="ChEBI" id="CHEBI:30616"/>
        <dbReference type="ChEBI" id="CHEBI:33019"/>
        <dbReference type="ChEBI" id="CHEBI:33384"/>
        <dbReference type="ChEBI" id="CHEBI:78442"/>
        <dbReference type="ChEBI" id="CHEBI:78533"/>
        <dbReference type="ChEBI" id="CHEBI:456215"/>
        <dbReference type="EC" id="6.1.1.11"/>
    </reaction>
</comment>
<comment type="subunit">
    <text evidence="3 7">Homodimer (PubMed:30570212). The tRNA molecule binds across the dimer (Probable).</text>
</comment>
<comment type="subcellular location">
    <subcellularLocation>
        <location evidence="5 6">Cytoplasm</location>
        <location evidence="5 6">Cytosol</location>
    </subcellularLocation>
</comment>
<comment type="domain">
    <text evidence="2">Consists of two distinct domains, a catalytic core and a N-terminal extension that is involved in tRNA binding.</text>
</comment>
<comment type="similarity">
    <text evidence="4">Belongs to the class-II aminoacyl-tRNA synthetase family. Type-1 seryl-tRNA synthetase subfamily.</text>
</comment>
<comment type="caution">
    <text evidence="4">Although this enzyme participates in the selenocysteinyl-tRNA(Sec) biosynthesis pathway in many taxa, this pathway has been shown in PubMed:32220326 to be lost in embryophyta.</text>
</comment>